<accession>Q7MTR6</accession>
<feature type="chain" id="PRO_0000159455" description="Cysteine--tRNA ligase">
    <location>
        <begin position="1"/>
        <end position="490"/>
    </location>
</feature>
<feature type="short sequence motif" description="'HIGH' region">
    <location>
        <begin position="33"/>
        <end position="43"/>
    </location>
</feature>
<feature type="short sequence motif" description="'KMSKS' region">
    <location>
        <begin position="283"/>
        <end position="287"/>
    </location>
</feature>
<feature type="binding site" evidence="1">
    <location>
        <position position="31"/>
    </location>
    <ligand>
        <name>Zn(2+)</name>
        <dbReference type="ChEBI" id="CHEBI:29105"/>
    </ligand>
</feature>
<feature type="binding site" evidence="1">
    <location>
        <position position="226"/>
    </location>
    <ligand>
        <name>Zn(2+)</name>
        <dbReference type="ChEBI" id="CHEBI:29105"/>
    </ligand>
</feature>
<feature type="binding site" evidence="1">
    <location>
        <position position="251"/>
    </location>
    <ligand>
        <name>Zn(2+)</name>
        <dbReference type="ChEBI" id="CHEBI:29105"/>
    </ligand>
</feature>
<feature type="binding site" evidence="1">
    <location>
        <position position="255"/>
    </location>
    <ligand>
        <name>Zn(2+)</name>
        <dbReference type="ChEBI" id="CHEBI:29105"/>
    </ligand>
</feature>
<feature type="binding site" evidence="1">
    <location>
        <position position="286"/>
    </location>
    <ligand>
        <name>ATP</name>
        <dbReference type="ChEBI" id="CHEBI:30616"/>
    </ligand>
</feature>
<proteinExistence type="inferred from homology"/>
<protein>
    <recommendedName>
        <fullName evidence="1">Cysteine--tRNA ligase</fullName>
        <ecNumber evidence="1">6.1.1.16</ecNumber>
    </recommendedName>
    <alternativeName>
        <fullName evidence="1">Cysteinyl-tRNA synthetase</fullName>
        <shortName evidence="1">CysRS</shortName>
    </alternativeName>
</protein>
<sequence>MEHPLEIYNTLHRKKERFEPIHKPHVGLYVCGPTVYGDAHLGHARPAITFDLLYRYLRHLGYQVRYVRNITDVGHLEHDADEGEDKIAKKARLEQLEPMEVVQYYLTRYRHAMEALNVLPPSIEPMASGHIIEQIELVKQILKAGYAYESCGSVYFDVEKYNQDHRYGVLSGRNIEEMINNTRRLDGQDEKRNGVDFALWKAAQPEHIMRWPSPWGMGFPGWHCECTAMGRKYLGEEFDIHGGGMDLVFPHHECEIAQAVASQGHPIVRYWMHNNMITINGQKMGKSLGNFITLEEFFSGAHPSLNKAYSPMTIRFFILGAHYRGTVDFSNEALEAAEKGLERLLDAAALLDGLKTADTTSVEVGDLRKRCYDAMNDDLNSPMVIAALFDAARAINAVHNGQGTITSSNLEELRTTFRLFLFDLLGMRDERASSAGGSEAFGKAMDLLLSIRAEAKARKDWATSDKIRDELTALGFTIKDTKDGAEWKLN</sequence>
<dbReference type="EC" id="6.1.1.16" evidence="1"/>
<dbReference type="EMBL" id="AE015924">
    <property type="protein sequence ID" value="AAQ66864.1"/>
    <property type="molecule type" value="Genomic_DNA"/>
</dbReference>
<dbReference type="RefSeq" id="WP_005874810.1">
    <property type="nucleotide sequence ID" value="NC_002950.2"/>
</dbReference>
<dbReference type="SMR" id="Q7MTR6"/>
<dbReference type="STRING" id="242619.PG_1878"/>
<dbReference type="EnsemblBacteria" id="AAQ66864">
    <property type="protein sequence ID" value="AAQ66864"/>
    <property type="gene ID" value="PG_1878"/>
</dbReference>
<dbReference type="KEGG" id="pgi:PG_1878"/>
<dbReference type="PATRIC" id="fig|242619.8.peg.1735"/>
<dbReference type="eggNOG" id="COG0215">
    <property type="taxonomic scope" value="Bacteria"/>
</dbReference>
<dbReference type="HOGENOM" id="CLU_013528_0_1_10"/>
<dbReference type="BioCyc" id="PGIN242619:G1G02-1746-MONOMER"/>
<dbReference type="Proteomes" id="UP000000588">
    <property type="component" value="Chromosome"/>
</dbReference>
<dbReference type="GO" id="GO:0005829">
    <property type="term" value="C:cytosol"/>
    <property type="evidence" value="ECO:0007669"/>
    <property type="project" value="TreeGrafter"/>
</dbReference>
<dbReference type="GO" id="GO:0005524">
    <property type="term" value="F:ATP binding"/>
    <property type="evidence" value="ECO:0007669"/>
    <property type="project" value="UniProtKB-UniRule"/>
</dbReference>
<dbReference type="GO" id="GO:0004817">
    <property type="term" value="F:cysteine-tRNA ligase activity"/>
    <property type="evidence" value="ECO:0007669"/>
    <property type="project" value="UniProtKB-UniRule"/>
</dbReference>
<dbReference type="GO" id="GO:0008270">
    <property type="term" value="F:zinc ion binding"/>
    <property type="evidence" value="ECO:0007669"/>
    <property type="project" value="UniProtKB-UniRule"/>
</dbReference>
<dbReference type="GO" id="GO:0006423">
    <property type="term" value="P:cysteinyl-tRNA aminoacylation"/>
    <property type="evidence" value="ECO:0007669"/>
    <property type="project" value="UniProtKB-UniRule"/>
</dbReference>
<dbReference type="CDD" id="cd00672">
    <property type="entry name" value="CysRS_core"/>
    <property type="match status" value="1"/>
</dbReference>
<dbReference type="FunFam" id="3.40.50.620:FF:000140">
    <property type="entry name" value="Cysteine--tRNA ligase"/>
    <property type="match status" value="1"/>
</dbReference>
<dbReference type="Gene3D" id="1.20.120.1910">
    <property type="entry name" value="Cysteine-tRNA ligase, C-terminal anti-codon recognition domain"/>
    <property type="match status" value="1"/>
</dbReference>
<dbReference type="Gene3D" id="3.40.50.620">
    <property type="entry name" value="HUPs"/>
    <property type="match status" value="1"/>
</dbReference>
<dbReference type="HAMAP" id="MF_00041">
    <property type="entry name" value="Cys_tRNA_synth"/>
    <property type="match status" value="1"/>
</dbReference>
<dbReference type="InterPro" id="IPR015803">
    <property type="entry name" value="Cys-tRNA-ligase"/>
</dbReference>
<dbReference type="InterPro" id="IPR015273">
    <property type="entry name" value="Cys-tRNA-synt_Ia_DALR"/>
</dbReference>
<dbReference type="InterPro" id="IPR024909">
    <property type="entry name" value="Cys-tRNA/MSH_ligase"/>
</dbReference>
<dbReference type="InterPro" id="IPR056411">
    <property type="entry name" value="CysS_C"/>
</dbReference>
<dbReference type="InterPro" id="IPR014729">
    <property type="entry name" value="Rossmann-like_a/b/a_fold"/>
</dbReference>
<dbReference type="InterPro" id="IPR032678">
    <property type="entry name" value="tRNA-synt_1_cat_dom"/>
</dbReference>
<dbReference type="InterPro" id="IPR009080">
    <property type="entry name" value="tRNAsynth_Ia_anticodon-bd"/>
</dbReference>
<dbReference type="NCBIfam" id="TIGR00435">
    <property type="entry name" value="cysS"/>
    <property type="match status" value="1"/>
</dbReference>
<dbReference type="PANTHER" id="PTHR10890:SF3">
    <property type="entry name" value="CYSTEINE--TRNA LIGASE, CYTOPLASMIC"/>
    <property type="match status" value="1"/>
</dbReference>
<dbReference type="PANTHER" id="PTHR10890">
    <property type="entry name" value="CYSTEINYL-TRNA SYNTHETASE"/>
    <property type="match status" value="1"/>
</dbReference>
<dbReference type="Pfam" id="PF23493">
    <property type="entry name" value="CysS_C"/>
    <property type="match status" value="1"/>
</dbReference>
<dbReference type="Pfam" id="PF09190">
    <property type="entry name" value="DALR_2"/>
    <property type="match status" value="1"/>
</dbReference>
<dbReference type="Pfam" id="PF01406">
    <property type="entry name" value="tRNA-synt_1e"/>
    <property type="match status" value="1"/>
</dbReference>
<dbReference type="PRINTS" id="PR00983">
    <property type="entry name" value="TRNASYNTHCYS"/>
</dbReference>
<dbReference type="SMART" id="SM00840">
    <property type="entry name" value="DALR_2"/>
    <property type="match status" value="1"/>
</dbReference>
<dbReference type="SUPFAM" id="SSF47323">
    <property type="entry name" value="Anticodon-binding domain of a subclass of class I aminoacyl-tRNA synthetases"/>
    <property type="match status" value="1"/>
</dbReference>
<dbReference type="SUPFAM" id="SSF52374">
    <property type="entry name" value="Nucleotidylyl transferase"/>
    <property type="match status" value="1"/>
</dbReference>
<gene>
    <name evidence="1" type="primary">cysS</name>
    <name type="ordered locus">PG_1878</name>
</gene>
<name>SYC_PORGI</name>
<reference key="1">
    <citation type="journal article" date="2003" name="J. Bacteriol.">
        <title>Complete genome sequence of the oral pathogenic bacterium Porphyromonas gingivalis strain W83.</title>
        <authorList>
            <person name="Nelson K.E."/>
            <person name="Fleischmann R.D."/>
            <person name="DeBoy R.T."/>
            <person name="Paulsen I.T."/>
            <person name="Fouts D.E."/>
            <person name="Eisen J.A."/>
            <person name="Daugherty S.C."/>
            <person name="Dodson R.J."/>
            <person name="Durkin A.S."/>
            <person name="Gwinn M.L."/>
            <person name="Haft D.H."/>
            <person name="Kolonay J.F."/>
            <person name="Nelson W.C."/>
            <person name="Mason T.M."/>
            <person name="Tallon L."/>
            <person name="Gray J."/>
            <person name="Granger D."/>
            <person name="Tettelin H."/>
            <person name="Dong H."/>
            <person name="Galvin J.L."/>
            <person name="Duncan M.J."/>
            <person name="Dewhirst F.E."/>
            <person name="Fraser C.M."/>
        </authorList>
    </citation>
    <scope>NUCLEOTIDE SEQUENCE [LARGE SCALE GENOMIC DNA]</scope>
    <source>
        <strain>ATCC BAA-308 / W83</strain>
    </source>
</reference>
<organism>
    <name type="scientific">Porphyromonas gingivalis (strain ATCC BAA-308 / W83)</name>
    <dbReference type="NCBI Taxonomy" id="242619"/>
    <lineage>
        <taxon>Bacteria</taxon>
        <taxon>Pseudomonadati</taxon>
        <taxon>Bacteroidota</taxon>
        <taxon>Bacteroidia</taxon>
        <taxon>Bacteroidales</taxon>
        <taxon>Porphyromonadaceae</taxon>
        <taxon>Porphyromonas</taxon>
    </lineage>
</organism>
<comment type="catalytic activity">
    <reaction evidence="1">
        <text>tRNA(Cys) + L-cysteine + ATP = L-cysteinyl-tRNA(Cys) + AMP + diphosphate</text>
        <dbReference type="Rhea" id="RHEA:17773"/>
        <dbReference type="Rhea" id="RHEA-COMP:9661"/>
        <dbReference type="Rhea" id="RHEA-COMP:9679"/>
        <dbReference type="ChEBI" id="CHEBI:30616"/>
        <dbReference type="ChEBI" id="CHEBI:33019"/>
        <dbReference type="ChEBI" id="CHEBI:35235"/>
        <dbReference type="ChEBI" id="CHEBI:78442"/>
        <dbReference type="ChEBI" id="CHEBI:78517"/>
        <dbReference type="ChEBI" id="CHEBI:456215"/>
        <dbReference type="EC" id="6.1.1.16"/>
    </reaction>
</comment>
<comment type="cofactor">
    <cofactor evidence="1">
        <name>Zn(2+)</name>
        <dbReference type="ChEBI" id="CHEBI:29105"/>
    </cofactor>
    <text evidence="1">Binds 1 zinc ion per subunit.</text>
</comment>
<comment type="subunit">
    <text evidence="1">Monomer.</text>
</comment>
<comment type="subcellular location">
    <subcellularLocation>
        <location evidence="1">Cytoplasm</location>
    </subcellularLocation>
</comment>
<comment type="similarity">
    <text evidence="1">Belongs to the class-I aminoacyl-tRNA synthetase family.</text>
</comment>
<keyword id="KW-0030">Aminoacyl-tRNA synthetase</keyword>
<keyword id="KW-0067">ATP-binding</keyword>
<keyword id="KW-0963">Cytoplasm</keyword>
<keyword id="KW-0436">Ligase</keyword>
<keyword id="KW-0479">Metal-binding</keyword>
<keyword id="KW-0547">Nucleotide-binding</keyword>
<keyword id="KW-0648">Protein biosynthesis</keyword>
<keyword id="KW-1185">Reference proteome</keyword>
<keyword id="KW-0862">Zinc</keyword>
<evidence type="ECO:0000255" key="1">
    <source>
        <dbReference type="HAMAP-Rule" id="MF_00041"/>
    </source>
</evidence>